<evidence type="ECO:0000255" key="1">
    <source>
        <dbReference type="HAMAP-Rule" id="MF_00532"/>
    </source>
</evidence>
<evidence type="ECO:0000305" key="2"/>
<keyword id="KW-1185">Reference proteome</keyword>
<keyword id="KW-0687">Ribonucleoprotein</keyword>
<keyword id="KW-0689">Ribosomal protein</keyword>
<reference key="1">
    <citation type="journal article" date="2009" name="PLoS Genet.">
        <title>Organised genome dynamics in the Escherichia coli species results in highly diverse adaptive paths.</title>
        <authorList>
            <person name="Touchon M."/>
            <person name="Hoede C."/>
            <person name="Tenaillon O."/>
            <person name="Barbe V."/>
            <person name="Baeriswyl S."/>
            <person name="Bidet P."/>
            <person name="Bingen E."/>
            <person name="Bonacorsi S."/>
            <person name="Bouchier C."/>
            <person name="Bouvet O."/>
            <person name="Calteau A."/>
            <person name="Chiapello H."/>
            <person name="Clermont O."/>
            <person name="Cruveiller S."/>
            <person name="Danchin A."/>
            <person name="Diard M."/>
            <person name="Dossat C."/>
            <person name="Karoui M.E."/>
            <person name="Frapy E."/>
            <person name="Garry L."/>
            <person name="Ghigo J.M."/>
            <person name="Gilles A.M."/>
            <person name="Johnson J."/>
            <person name="Le Bouguenec C."/>
            <person name="Lescat M."/>
            <person name="Mangenot S."/>
            <person name="Martinez-Jehanne V."/>
            <person name="Matic I."/>
            <person name="Nassif X."/>
            <person name="Oztas S."/>
            <person name="Petit M.A."/>
            <person name="Pichon C."/>
            <person name="Rouy Z."/>
            <person name="Ruf C.S."/>
            <person name="Schneider D."/>
            <person name="Tourret J."/>
            <person name="Vacherie B."/>
            <person name="Vallenet D."/>
            <person name="Medigue C."/>
            <person name="Rocha E.P.C."/>
            <person name="Denamur E."/>
        </authorList>
    </citation>
    <scope>NUCLEOTIDE SEQUENCE [LARGE SCALE GENOMIC DNA]</scope>
    <source>
        <strain>55989 / EAEC</strain>
    </source>
</reference>
<name>RS9_ECO55</name>
<sequence length="130" mass="14856">MAENQYYGTGRRKSSAARVFIKPGNGKIVINQRSLEQYFGRETARMVVRQPLELVDMVEKLDLYITVKGGGISGQAGAIRHGITRALMEYDESLRSELRKAGFVTRDARQVERKKVGLRKARRRPQFSKR</sequence>
<gene>
    <name evidence="1" type="primary">rpsI</name>
    <name type="ordered locus">EC55989_3643</name>
</gene>
<dbReference type="EMBL" id="CU928145">
    <property type="protein sequence ID" value="CAU99892.1"/>
    <property type="molecule type" value="Genomic_DNA"/>
</dbReference>
<dbReference type="RefSeq" id="WP_000829818.1">
    <property type="nucleotide sequence ID" value="NZ_CP028304.1"/>
</dbReference>
<dbReference type="SMR" id="B7LHT8"/>
<dbReference type="GeneID" id="98390344"/>
<dbReference type="KEGG" id="eck:EC55989_3643"/>
<dbReference type="HOGENOM" id="CLU_046483_2_1_6"/>
<dbReference type="Proteomes" id="UP000000746">
    <property type="component" value="Chromosome"/>
</dbReference>
<dbReference type="GO" id="GO:0022627">
    <property type="term" value="C:cytosolic small ribosomal subunit"/>
    <property type="evidence" value="ECO:0007669"/>
    <property type="project" value="TreeGrafter"/>
</dbReference>
<dbReference type="GO" id="GO:0003723">
    <property type="term" value="F:RNA binding"/>
    <property type="evidence" value="ECO:0007669"/>
    <property type="project" value="TreeGrafter"/>
</dbReference>
<dbReference type="GO" id="GO:0003735">
    <property type="term" value="F:structural constituent of ribosome"/>
    <property type="evidence" value="ECO:0007669"/>
    <property type="project" value="InterPro"/>
</dbReference>
<dbReference type="GO" id="GO:0006412">
    <property type="term" value="P:translation"/>
    <property type="evidence" value="ECO:0007669"/>
    <property type="project" value="UniProtKB-UniRule"/>
</dbReference>
<dbReference type="FunFam" id="3.30.230.10:FF:000001">
    <property type="entry name" value="30S ribosomal protein S9"/>
    <property type="match status" value="1"/>
</dbReference>
<dbReference type="Gene3D" id="3.30.230.10">
    <property type="match status" value="1"/>
</dbReference>
<dbReference type="HAMAP" id="MF_00532_B">
    <property type="entry name" value="Ribosomal_uS9_B"/>
    <property type="match status" value="1"/>
</dbReference>
<dbReference type="InterPro" id="IPR020568">
    <property type="entry name" value="Ribosomal_Su5_D2-typ_SF"/>
</dbReference>
<dbReference type="InterPro" id="IPR000754">
    <property type="entry name" value="Ribosomal_uS9"/>
</dbReference>
<dbReference type="InterPro" id="IPR023035">
    <property type="entry name" value="Ribosomal_uS9_bac/plastid"/>
</dbReference>
<dbReference type="InterPro" id="IPR020574">
    <property type="entry name" value="Ribosomal_uS9_CS"/>
</dbReference>
<dbReference type="InterPro" id="IPR014721">
    <property type="entry name" value="Ribsml_uS5_D2-typ_fold_subgr"/>
</dbReference>
<dbReference type="NCBIfam" id="NF001099">
    <property type="entry name" value="PRK00132.1"/>
    <property type="match status" value="1"/>
</dbReference>
<dbReference type="PANTHER" id="PTHR21569">
    <property type="entry name" value="RIBOSOMAL PROTEIN S9"/>
    <property type="match status" value="1"/>
</dbReference>
<dbReference type="PANTHER" id="PTHR21569:SF1">
    <property type="entry name" value="SMALL RIBOSOMAL SUBUNIT PROTEIN US9M"/>
    <property type="match status" value="1"/>
</dbReference>
<dbReference type="Pfam" id="PF00380">
    <property type="entry name" value="Ribosomal_S9"/>
    <property type="match status" value="1"/>
</dbReference>
<dbReference type="SUPFAM" id="SSF54211">
    <property type="entry name" value="Ribosomal protein S5 domain 2-like"/>
    <property type="match status" value="1"/>
</dbReference>
<dbReference type="PROSITE" id="PS00360">
    <property type="entry name" value="RIBOSOMAL_S9"/>
    <property type="match status" value="1"/>
</dbReference>
<feature type="chain" id="PRO_1000146454" description="Small ribosomal subunit protein uS9">
    <location>
        <begin position="1"/>
        <end position="130"/>
    </location>
</feature>
<proteinExistence type="inferred from homology"/>
<comment type="similarity">
    <text evidence="1">Belongs to the universal ribosomal protein uS9 family.</text>
</comment>
<accession>B7LHT8</accession>
<protein>
    <recommendedName>
        <fullName evidence="1">Small ribosomal subunit protein uS9</fullName>
    </recommendedName>
    <alternativeName>
        <fullName evidence="2">30S ribosomal protein S9</fullName>
    </alternativeName>
</protein>
<organism>
    <name type="scientific">Escherichia coli (strain 55989 / EAEC)</name>
    <dbReference type="NCBI Taxonomy" id="585055"/>
    <lineage>
        <taxon>Bacteria</taxon>
        <taxon>Pseudomonadati</taxon>
        <taxon>Pseudomonadota</taxon>
        <taxon>Gammaproteobacteria</taxon>
        <taxon>Enterobacterales</taxon>
        <taxon>Enterobacteriaceae</taxon>
        <taxon>Escherichia</taxon>
    </lineage>
</organism>